<organism>
    <name type="scientific">Pelobacter propionicus (strain DSM 2379 / NBRC 103807 / OttBd1)</name>
    <dbReference type="NCBI Taxonomy" id="338966"/>
    <lineage>
        <taxon>Bacteria</taxon>
        <taxon>Pseudomonadati</taxon>
        <taxon>Thermodesulfobacteriota</taxon>
        <taxon>Desulfuromonadia</taxon>
        <taxon>Desulfuromonadales</taxon>
        <taxon>Desulfuromonadaceae</taxon>
        <taxon>Pelobacter</taxon>
    </lineage>
</organism>
<comment type="function">
    <text evidence="1">One of two assembly initiator proteins, it binds directly to the 5'-end of the 23S rRNA, where it nucleates assembly of the 50S subunit.</text>
</comment>
<comment type="function">
    <text evidence="1">One of the proteins that surrounds the polypeptide exit tunnel on the outside of the subunit.</text>
</comment>
<comment type="subunit">
    <text evidence="1">Part of the 50S ribosomal subunit.</text>
</comment>
<comment type="similarity">
    <text evidence="1">Belongs to the universal ribosomal protein uL24 family.</text>
</comment>
<name>RL24_PELPD</name>
<sequence>MQATKTHVRKGETVMVIAGKDKNKTGTVMQFLPKKDGIIVEGLNMVKRHVKARGNEPGGIKEKEASIHISNVMPYCAKCAKPVRVRLKVLENGDKQRLCAKCGNSLEK</sequence>
<feature type="chain" id="PRO_0000355703" description="Large ribosomal subunit protein uL24">
    <location>
        <begin position="1"/>
        <end position="108"/>
    </location>
</feature>
<protein>
    <recommendedName>
        <fullName evidence="1">Large ribosomal subunit protein uL24</fullName>
    </recommendedName>
    <alternativeName>
        <fullName evidence="2">50S ribosomal protein L24</fullName>
    </alternativeName>
</protein>
<proteinExistence type="inferred from homology"/>
<keyword id="KW-1185">Reference proteome</keyword>
<keyword id="KW-0687">Ribonucleoprotein</keyword>
<keyword id="KW-0689">Ribosomal protein</keyword>
<keyword id="KW-0694">RNA-binding</keyword>
<keyword id="KW-0699">rRNA-binding</keyword>
<accession>A1ALV2</accession>
<dbReference type="EMBL" id="CP000482">
    <property type="protein sequence ID" value="ABK98322.1"/>
    <property type="molecule type" value="Genomic_DNA"/>
</dbReference>
<dbReference type="RefSeq" id="WP_011734634.1">
    <property type="nucleotide sequence ID" value="NC_008609.1"/>
</dbReference>
<dbReference type="SMR" id="A1ALV2"/>
<dbReference type="STRING" id="338966.Ppro_0691"/>
<dbReference type="KEGG" id="ppd:Ppro_0691"/>
<dbReference type="eggNOG" id="COG0198">
    <property type="taxonomic scope" value="Bacteria"/>
</dbReference>
<dbReference type="HOGENOM" id="CLU_093315_2_3_7"/>
<dbReference type="OrthoDB" id="9807419at2"/>
<dbReference type="Proteomes" id="UP000006732">
    <property type="component" value="Chromosome"/>
</dbReference>
<dbReference type="GO" id="GO:1990904">
    <property type="term" value="C:ribonucleoprotein complex"/>
    <property type="evidence" value="ECO:0007669"/>
    <property type="project" value="UniProtKB-KW"/>
</dbReference>
<dbReference type="GO" id="GO:0005840">
    <property type="term" value="C:ribosome"/>
    <property type="evidence" value="ECO:0007669"/>
    <property type="project" value="UniProtKB-KW"/>
</dbReference>
<dbReference type="GO" id="GO:0019843">
    <property type="term" value="F:rRNA binding"/>
    <property type="evidence" value="ECO:0007669"/>
    <property type="project" value="UniProtKB-UniRule"/>
</dbReference>
<dbReference type="GO" id="GO:0003735">
    <property type="term" value="F:structural constituent of ribosome"/>
    <property type="evidence" value="ECO:0007669"/>
    <property type="project" value="InterPro"/>
</dbReference>
<dbReference type="GO" id="GO:0006412">
    <property type="term" value="P:translation"/>
    <property type="evidence" value="ECO:0007669"/>
    <property type="project" value="UniProtKB-UniRule"/>
</dbReference>
<dbReference type="CDD" id="cd06089">
    <property type="entry name" value="KOW_RPL26"/>
    <property type="match status" value="1"/>
</dbReference>
<dbReference type="Gene3D" id="2.30.30.30">
    <property type="match status" value="1"/>
</dbReference>
<dbReference type="HAMAP" id="MF_01326_B">
    <property type="entry name" value="Ribosomal_uL24_B"/>
    <property type="match status" value="1"/>
</dbReference>
<dbReference type="InterPro" id="IPR005824">
    <property type="entry name" value="KOW"/>
</dbReference>
<dbReference type="InterPro" id="IPR014722">
    <property type="entry name" value="Rib_uL2_dom2"/>
</dbReference>
<dbReference type="InterPro" id="IPR003256">
    <property type="entry name" value="Ribosomal_uL24"/>
</dbReference>
<dbReference type="InterPro" id="IPR041988">
    <property type="entry name" value="Ribosomal_uL24_KOW"/>
</dbReference>
<dbReference type="InterPro" id="IPR008991">
    <property type="entry name" value="Translation_prot_SH3-like_sf"/>
</dbReference>
<dbReference type="NCBIfam" id="TIGR01079">
    <property type="entry name" value="rplX_bact"/>
    <property type="match status" value="1"/>
</dbReference>
<dbReference type="PANTHER" id="PTHR12903">
    <property type="entry name" value="MITOCHONDRIAL RIBOSOMAL PROTEIN L24"/>
    <property type="match status" value="1"/>
</dbReference>
<dbReference type="Pfam" id="PF00467">
    <property type="entry name" value="KOW"/>
    <property type="match status" value="1"/>
</dbReference>
<dbReference type="Pfam" id="PF17136">
    <property type="entry name" value="ribosomal_L24"/>
    <property type="match status" value="1"/>
</dbReference>
<dbReference type="SMART" id="SM00739">
    <property type="entry name" value="KOW"/>
    <property type="match status" value="1"/>
</dbReference>
<dbReference type="SUPFAM" id="SSF50104">
    <property type="entry name" value="Translation proteins SH3-like domain"/>
    <property type="match status" value="1"/>
</dbReference>
<evidence type="ECO:0000255" key="1">
    <source>
        <dbReference type="HAMAP-Rule" id="MF_01326"/>
    </source>
</evidence>
<evidence type="ECO:0000305" key="2"/>
<gene>
    <name evidence="1" type="primary">rplX</name>
    <name type="ordered locus">Ppro_0691</name>
</gene>
<reference key="1">
    <citation type="submission" date="2006-10" db="EMBL/GenBank/DDBJ databases">
        <title>Complete sequence of chromosome of Pelobacter propionicus DSM 2379.</title>
        <authorList>
            <consortium name="US DOE Joint Genome Institute"/>
            <person name="Copeland A."/>
            <person name="Lucas S."/>
            <person name="Lapidus A."/>
            <person name="Barry K."/>
            <person name="Detter J.C."/>
            <person name="Glavina del Rio T."/>
            <person name="Hammon N."/>
            <person name="Israni S."/>
            <person name="Dalin E."/>
            <person name="Tice H."/>
            <person name="Pitluck S."/>
            <person name="Saunders E."/>
            <person name="Brettin T."/>
            <person name="Bruce D."/>
            <person name="Han C."/>
            <person name="Tapia R."/>
            <person name="Schmutz J."/>
            <person name="Larimer F."/>
            <person name="Land M."/>
            <person name="Hauser L."/>
            <person name="Kyrpides N."/>
            <person name="Kim E."/>
            <person name="Lovley D."/>
            <person name="Richardson P."/>
        </authorList>
    </citation>
    <scope>NUCLEOTIDE SEQUENCE [LARGE SCALE GENOMIC DNA]</scope>
    <source>
        <strain>DSM 2379 / NBRC 103807 / OttBd1</strain>
    </source>
</reference>